<comment type="function">
    <text evidence="1">Involved in rRNA processing.</text>
</comment>
<comment type="subcellular location">
    <subcellularLocation>
        <location evidence="1">Nucleus</location>
        <location evidence="1">Nucleolus</location>
    </subcellularLocation>
</comment>
<comment type="similarity">
    <text evidence="4">Belongs to the EFG1 family.</text>
</comment>
<evidence type="ECO:0000250" key="1"/>
<evidence type="ECO:0000255" key="2"/>
<evidence type="ECO:0000256" key="3">
    <source>
        <dbReference type="SAM" id="MobiDB-lite"/>
    </source>
</evidence>
<evidence type="ECO:0000305" key="4"/>
<organism>
    <name type="scientific">Meyerozyma guilliermondii (strain ATCC 6260 / CBS 566 / DSM 6381 / JCM 1539 / NBRC 10279 / NRRL Y-324)</name>
    <name type="common">Yeast</name>
    <name type="synonym">Candida guilliermondii</name>
    <dbReference type="NCBI Taxonomy" id="294746"/>
    <lineage>
        <taxon>Eukaryota</taxon>
        <taxon>Fungi</taxon>
        <taxon>Dikarya</taxon>
        <taxon>Ascomycota</taxon>
        <taxon>Saccharomycotina</taxon>
        <taxon>Pichiomycetes</taxon>
        <taxon>Debaryomycetaceae</taxon>
        <taxon>Meyerozyma</taxon>
    </lineage>
</organism>
<dbReference type="EMBL" id="CH408157">
    <property type="protein sequence ID" value="EDK38936.2"/>
    <property type="molecule type" value="Genomic_DNA"/>
</dbReference>
<dbReference type="RefSeq" id="XP_001485305.1">
    <property type="nucleotide sequence ID" value="XM_001485255.1"/>
</dbReference>
<dbReference type="SMR" id="A5DID3"/>
<dbReference type="FunCoup" id="A5DID3">
    <property type="interactions" value="175"/>
</dbReference>
<dbReference type="STRING" id="294746.A5DID3"/>
<dbReference type="GeneID" id="5126679"/>
<dbReference type="KEGG" id="pgu:PGUG_03034"/>
<dbReference type="VEuPathDB" id="FungiDB:PGUG_03034"/>
<dbReference type="eggNOG" id="KOG4484">
    <property type="taxonomic scope" value="Eukaryota"/>
</dbReference>
<dbReference type="HOGENOM" id="CLU_066912_2_0_1"/>
<dbReference type="InParanoid" id="A5DID3"/>
<dbReference type="OMA" id="KPHRIQE"/>
<dbReference type="OrthoDB" id="47732at2759"/>
<dbReference type="Proteomes" id="UP000001997">
    <property type="component" value="Unassembled WGS sequence"/>
</dbReference>
<dbReference type="GO" id="GO:0005730">
    <property type="term" value="C:nucleolus"/>
    <property type="evidence" value="ECO:0007669"/>
    <property type="project" value="UniProtKB-SubCell"/>
</dbReference>
<dbReference type="GO" id="GO:0030688">
    <property type="term" value="C:preribosome, small subunit precursor"/>
    <property type="evidence" value="ECO:0007669"/>
    <property type="project" value="TreeGrafter"/>
</dbReference>
<dbReference type="GO" id="GO:0000462">
    <property type="term" value="P:maturation of SSU-rRNA from tricistronic rRNA transcript (SSU-rRNA, 5.8S rRNA, LSU-rRNA)"/>
    <property type="evidence" value="ECO:0007669"/>
    <property type="project" value="TreeGrafter"/>
</dbReference>
<dbReference type="InterPro" id="IPR019310">
    <property type="entry name" value="Efg1"/>
</dbReference>
<dbReference type="InterPro" id="IPR050786">
    <property type="entry name" value="EFG1_rRNA-proc"/>
</dbReference>
<dbReference type="PANTHER" id="PTHR33911">
    <property type="entry name" value="RRNA-PROCESSING PROTEIN EFG1"/>
    <property type="match status" value="1"/>
</dbReference>
<dbReference type="PANTHER" id="PTHR33911:SF1">
    <property type="entry name" value="RRNA-PROCESSING PROTEIN EFG1"/>
    <property type="match status" value="1"/>
</dbReference>
<dbReference type="Pfam" id="PF10153">
    <property type="entry name" value="Efg1"/>
    <property type="match status" value="1"/>
</dbReference>
<accession>A5DID3</accession>
<keyword id="KW-0175">Coiled coil</keyword>
<keyword id="KW-0539">Nucleus</keyword>
<keyword id="KW-1185">Reference proteome</keyword>
<keyword id="KW-0698">rRNA processing</keyword>
<name>EFG1P_PICGU</name>
<reference key="1">
    <citation type="journal article" date="2009" name="Nature">
        <title>Evolution of pathogenicity and sexual reproduction in eight Candida genomes.</title>
        <authorList>
            <person name="Butler G."/>
            <person name="Rasmussen M.D."/>
            <person name="Lin M.F."/>
            <person name="Santos M.A.S."/>
            <person name="Sakthikumar S."/>
            <person name="Munro C.A."/>
            <person name="Rheinbay E."/>
            <person name="Grabherr M."/>
            <person name="Forche A."/>
            <person name="Reedy J.L."/>
            <person name="Agrafioti I."/>
            <person name="Arnaud M.B."/>
            <person name="Bates S."/>
            <person name="Brown A.J.P."/>
            <person name="Brunke S."/>
            <person name="Costanzo M.C."/>
            <person name="Fitzpatrick D.A."/>
            <person name="de Groot P.W.J."/>
            <person name="Harris D."/>
            <person name="Hoyer L.L."/>
            <person name="Hube B."/>
            <person name="Klis F.M."/>
            <person name="Kodira C."/>
            <person name="Lennard N."/>
            <person name="Logue M.E."/>
            <person name="Martin R."/>
            <person name="Neiman A.M."/>
            <person name="Nikolaou E."/>
            <person name="Quail M.A."/>
            <person name="Quinn J."/>
            <person name="Santos M.C."/>
            <person name="Schmitzberger F.F."/>
            <person name="Sherlock G."/>
            <person name="Shah P."/>
            <person name="Silverstein K.A.T."/>
            <person name="Skrzypek M.S."/>
            <person name="Soll D."/>
            <person name="Staggs R."/>
            <person name="Stansfield I."/>
            <person name="Stumpf M.P.H."/>
            <person name="Sudbery P.E."/>
            <person name="Srikantha T."/>
            <person name="Zeng Q."/>
            <person name="Berman J."/>
            <person name="Berriman M."/>
            <person name="Heitman J."/>
            <person name="Gow N.A.R."/>
            <person name="Lorenz M.C."/>
            <person name="Birren B.W."/>
            <person name="Kellis M."/>
            <person name="Cuomo C.A."/>
        </authorList>
    </citation>
    <scope>NUCLEOTIDE SEQUENCE [LARGE SCALE GENOMIC DNA]</scope>
    <source>
        <strain>ATCC 6260 / CBS 566 / DSM 6381 / JCM 1539 / NBRC 10279 / NRRL Y-324</strain>
    </source>
</reference>
<sequence>MPKSVPSRQGSASADIYNSGSAKIKKKIRDIERLLKKDNVPANIRIDNERALKALKVELANKQQDHKTQKIAKKYHMVRFFERKKALRKLKQARKELQNVSETGERKDIKKARKVVRHCEIDVAYVVLFPKAEKYISLYPNHQPEKNPDTENAKKGLEKTESRRRELRKKVEKLVDDKALPFSIDDLLEGKSVDVKHDFESGHNQEIDAPETKIQEEDDFFE</sequence>
<gene>
    <name type="primary">EFG1</name>
    <name type="ORF">PGUG_03034</name>
</gene>
<protein>
    <recommendedName>
        <fullName>rRNA-processing protein EFG1</fullName>
    </recommendedName>
</protein>
<proteinExistence type="inferred from homology"/>
<feature type="chain" id="PRO_0000330279" description="rRNA-processing protein EFG1">
    <location>
        <begin position="1"/>
        <end position="222"/>
    </location>
</feature>
<feature type="region of interest" description="Disordered" evidence="3">
    <location>
        <begin position="140"/>
        <end position="166"/>
    </location>
</feature>
<feature type="region of interest" description="Disordered" evidence="3">
    <location>
        <begin position="199"/>
        <end position="222"/>
    </location>
</feature>
<feature type="coiled-coil region" evidence="2">
    <location>
        <begin position="47"/>
        <end position="108"/>
    </location>
</feature>
<feature type="coiled-coil region" evidence="2">
    <location>
        <begin position="149"/>
        <end position="180"/>
    </location>
</feature>
<feature type="compositionally biased region" description="Basic and acidic residues" evidence="3">
    <location>
        <begin position="143"/>
        <end position="164"/>
    </location>
</feature>
<feature type="compositionally biased region" description="Basic and acidic residues" evidence="3">
    <location>
        <begin position="199"/>
        <end position="215"/>
    </location>
</feature>